<comment type="function">
    <text evidence="1">Catalyzes the attachment of isoleucine to tRNA(Ile). As IleRS can inadvertently accommodate and process structurally similar amino acids such as valine, to avoid such errors it has two additional distinct tRNA(Ile)-dependent editing activities. One activity is designated as 'pretransfer' editing and involves the hydrolysis of activated Val-AMP. The other activity is designated 'posttransfer' editing and involves deacylation of mischarged Val-tRNA(Ile).</text>
</comment>
<comment type="catalytic activity">
    <reaction evidence="1">
        <text>tRNA(Ile) + L-isoleucine + ATP = L-isoleucyl-tRNA(Ile) + AMP + diphosphate</text>
        <dbReference type="Rhea" id="RHEA:11060"/>
        <dbReference type="Rhea" id="RHEA-COMP:9666"/>
        <dbReference type="Rhea" id="RHEA-COMP:9695"/>
        <dbReference type="ChEBI" id="CHEBI:30616"/>
        <dbReference type="ChEBI" id="CHEBI:33019"/>
        <dbReference type="ChEBI" id="CHEBI:58045"/>
        <dbReference type="ChEBI" id="CHEBI:78442"/>
        <dbReference type="ChEBI" id="CHEBI:78528"/>
        <dbReference type="ChEBI" id="CHEBI:456215"/>
        <dbReference type="EC" id="6.1.1.5"/>
    </reaction>
</comment>
<comment type="cofactor">
    <cofactor evidence="1">
        <name>Zn(2+)</name>
        <dbReference type="ChEBI" id="CHEBI:29105"/>
    </cofactor>
    <text evidence="1">Binds 1 zinc ion per subunit.</text>
</comment>
<comment type="subunit">
    <text evidence="1">Monomer.</text>
</comment>
<comment type="subcellular location">
    <subcellularLocation>
        <location evidence="1">Cytoplasm</location>
    </subcellularLocation>
</comment>
<comment type="domain">
    <text evidence="1">IleRS has two distinct active sites: one for aminoacylation and one for editing. The misactivated valine is translocated from the active site to the editing site, which sterically excludes the correctly activated isoleucine. The single editing site contains two valyl binding pockets, one specific for each substrate (Val-AMP or Val-tRNA(Ile)).</text>
</comment>
<comment type="similarity">
    <text evidence="1">Belongs to the class-I aminoacyl-tRNA synthetase family. IleS type 1 subfamily.</text>
</comment>
<proteinExistence type="inferred from homology"/>
<gene>
    <name evidence="1" type="primary">ileS</name>
    <name type="ordered locus">MAE_11160</name>
</gene>
<reference key="1">
    <citation type="journal article" date="2007" name="DNA Res.">
        <title>Complete genomic structure of the bloom-forming toxic cyanobacterium Microcystis aeruginosa NIES-843.</title>
        <authorList>
            <person name="Kaneko T."/>
            <person name="Nakajima N."/>
            <person name="Okamoto S."/>
            <person name="Suzuki I."/>
            <person name="Tanabe Y."/>
            <person name="Tamaoki M."/>
            <person name="Nakamura Y."/>
            <person name="Kasai F."/>
            <person name="Watanabe A."/>
            <person name="Kawashima K."/>
            <person name="Kishida Y."/>
            <person name="Ono A."/>
            <person name="Shimizu Y."/>
            <person name="Takahashi C."/>
            <person name="Minami C."/>
            <person name="Fujishiro T."/>
            <person name="Kohara M."/>
            <person name="Katoh M."/>
            <person name="Nakazaki N."/>
            <person name="Nakayama S."/>
            <person name="Yamada M."/>
            <person name="Tabata S."/>
            <person name="Watanabe M.M."/>
        </authorList>
    </citation>
    <scope>NUCLEOTIDE SEQUENCE [LARGE SCALE GENOMIC DNA]</scope>
    <source>
        <strain>NIES-843 / IAM M-247</strain>
    </source>
</reference>
<evidence type="ECO:0000255" key="1">
    <source>
        <dbReference type="HAMAP-Rule" id="MF_02002"/>
    </source>
</evidence>
<feature type="chain" id="PRO_1000088549" description="Isoleucine--tRNA ligase">
    <location>
        <begin position="1"/>
        <end position="952"/>
    </location>
</feature>
<feature type="short sequence motif" description="'HIGH' region">
    <location>
        <begin position="60"/>
        <end position="70"/>
    </location>
</feature>
<feature type="short sequence motif" description="'KMSKS' region">
    <location>
        <begin position="603"/>
        <end position="607"/>
    </location>
</feature>
<feature type="binding site" evidence="1">
    <location>
        <position position="562"/>
    </location>
    <ligand>
        <name>L-isoleucyl-5'-AMP</name>
        <dbReference type="ChEBI" id="CHEBI:178002"/>
    </ligand>
</feature>
<feature type="binding site" evidence="1">
    <location>
        <position position="606"/>
    </location>
    <ligand>
        <name>ATP</name>
        <dbReference type="ChEBI" id="CHEBI:30616"/>
    </ligand>
</feature>
<feature type="binding site" evidence="1">
    <location>
        <position position="921"/>
    </location>
    <ligand>
        <name>Zn(2+)</name>
        <dbReference type="ChEBI" id="CHEBI:29105"/>
    </ligand>
</feature>
<feature type="binding site" evidence="1">
    <location>
        <position position="924"/>
    </location>
    <ligand>
        <name>Zn(2+)</name>
        <dbReference type="ChEBI" id="CHEBI:29105"/>
    </ligand>
</feature>
<feature type="binding site" evidence="1">
    <location>
        <position position="941"/>
    </location>
    <ligand>
        <name>Zn(2+)</name>
        <dbReference type="ChEBI" id="CHEBI:29105"/>
    </ligand>
</feature>
<feature type="binding site" evidence="1">
    <location>
        <position position="944"/>
    </location>
    <ligand>
        <name>Zn(2+)</name>
        <dbReference type="ChEBI" id="CHEBI:29105"/>
    </ligand>
</feature>
<keyword id="KW-0030">Aminoacyl-tRNA synthetase</keyword>
<keyword id="KW-0067">ATP-binding</keyword>
<keyword id="KW-0963">Cytoplasm</keyword>
<keyword id="KW-0436">Ligase</keyword>
<keyword id="KW-0479">Metal-binding</keyword>
<keyword id="KW-0547">Nucleotide-binding</keyword>
<keyword id="KW-0648">Protein biosynthesis</keyword>
<keyword id="KW-0862">Zinc</keyword>
<name>SYI_MICAN</name>
<sequence length="952" mass="107865">MSNAKSYKDTVNLPQTDFDMRANASKREPEIQKFWQDEQIYEKLAQNNPKELFILHDGPPYANGSLHIGHALNKILKDIINKYKLLQGYKVRYVPGWDCHGLPIELKVLQSLKSSEKEGLTPVKLRQKAHDFALQTQKEQCEGFKRYGVWGDWENPYLTLQPEYEAAQIAVFGKMALKGYIYRGLKPVHWSPSSQTALAEAELEYPEGHTSRSVYVAFPITSVSTPVLRPFLPNLSVAIWTTTPWTLPGNLAVALNPELNYSVVETSESNYLIVATDLVEKLADTFNRTLTIKATVKGLELEHTKYRHPLFDRESAILIGGDYVTTDSGTGLVHTAPGHGQEDYIVGQRYGLPILSPVDDKGNFTAEAGQFAGLNVLKDANEAIILALTEKGALLKEEAYQHKYPYDWRTKKPTIFRATEQWFASVEGFRELALEAIDSVRWIPATGKNRITSMVSERSDWCISRQRSWGVPIPVFYDEETNEPLLTEETINHVQAIFGVKGSNAWWELSVEELLPPSYRNNGRSYRKGMDTMDVWFDSGSSWNAVANARPELSYPADMYLEGSDQHRGWFQSSLLTSVAANGIAPYKTVLTHGFVLDEQGRKMSKSLGNVIDPNVIINGGKDQKKEPAYGVDVIRLWVSSVDYTNDVNIGQNILKQLVDIRNKIRNTARFLLGSLNDFDPVKDAVAYEDLPEIDRYMLHRISEVFTEVTAAFESFQFFRFFQTVQNFCVVDLSNFYIDIAKDRLYISDPNSFRRRSCQTVYAIALENLAKAIAPVLSHLAEDIWQFLPYKTPYLSVFESGWLNIDPAWNNRELADKWAKFRQLRTEVNKVMETARNDKAIGASLEAKVLLYVPDESLQQELELFNNCDSLTGNKVDELRYLFLSSQVELVSDISAIQTAEYKGESDFVSVGIVKAEGEKCDRCWNYSTQVGKFADDPTICERCNAALKGEF</sequence>
<organism>
    <name type="scientific">Microcystis aeruginosa (strain NIES-843 / IAM M-2473)</name>
    <dbReference type="NCBI Taxonomy" id="449447"/>
    <lineage>
        <taxon>Bacteria</taxon>
        <taxon>Bacillati</taxon>
        <taxon>Cyanobacteriota</taxon>
        <taxon>Cyanophyceae</taxon>
        <taxon>Oscillatoriophycideae</taxon>
        <taxon>Chroococcales</taxon>
        <taxon>Microcystaceae</taxon>
        <taxon>Microcystis</taxon>
    </lineage>
</organism>
<accession>B0JSP4</accession>
<protein>
    <recommendedName>
        <fullName evidence="1">Isoleucine--tRNA ligase</fullName>
        <ecNumber evidence="1">6.1.1.5</ecNumber>
    </recommendedName>
    <alternativeName>
        <fullName evidence="1">Isoleucyl-tRNA synthetase</fullName>
        <shortName evidence="1">IleRS</shortName>
    </alternativeName>
</protein>
<dbReference type="EC" id="6.1.1.5" evidence="1"/>
<dbReference type="EMBL" id="AP009552">
    <property type="protein sequence ID" value="BAG00938.1"/>
    <property type="molecule type" value="Genomic_DNA"/>
</dbReference>
<dbReference type="RefSeq" id="WP_012264589.1">
    <property type="nucleotide sequence ID" value="NC_010296.1"/>
</dbReference>
<dbReference type="SMR" id="B0JSP4"/>
<dbReference type="STRING" id="449447.MAE_11160"/>
<dbReference type="PaxDb" id="449447-MAE_11160"/>
<dbReference type="EnsemblBacteria" id="BAG00938">
    <property type="protein sequence ID" value="BAG00938"/>
    <property type="gene ID" value="MAE_11160"/>
</dbReference>
<dbReference type="KEGG" id="mar:MAE_11160"/>
<dbReference type="PATRIC" id="fig|449447.4.peg.1022"/>
<dbReference type="eggNOG" id="COG0060">
    <property type="taxonomic scope" value="Bacteria"/>
</dbReference>
<dbReference type="HOGENOM" id="CLU_001493_7_0_3"/>
<dbReference type="BioCyc" id="MAER449447:MAE_RS04920-MONOMER"/>
<dbReference type="Proteomes" id="UP000001510">
    <property type="component" value="Chromosome"/>
</dbReference>
<dbReference type="GO" id="GO:0005737">
    <property type="term" value="C:cytoplasm"/>
    <property type="evidence" value="ECO:0007669"/>
    <property type="project" value="UniProtKB-SubCell"/>
</dbReference>
<dbReference type="GO" id="GO:0002161">
    <property type="term" value="F:aminoacyl-tRNA deacylase activity"/>
    <property type="evidence" value="ECO:0007669"/>
    <property type="project" value="InterPro"/>
</dbReference>
<dbReference type="GO" id="GO:0005524">
    <property type="term" value="F:ATP binding"/>
    <property type="evidence" value="ECO:0007669"/>
    <property type="project" value="UniProtKB-UniRule"/>
</dbReference>
<dbReference type="GO" id="GO:0004822">
    <property type="term" value="F:isoleucine-tRNA ligase activity"/>
    <property type="evidence" value="ECO:0007669"/>
    <property type="project" value="UniProtKB-UniRule"/>
</dbReference>
<dbReference type="GO" id="GO:0000049">
    <property type="term" value="F:tRNA binding"/>
    <property type="evidence" value="ECO:0007669"/>
    <property type="project" value="InterPro"/>
</dbReference>
<dbReference type="GO" id="GO:0008270">
    <property type="term" value="F:zinc ion binding"/>
    <property type="evidence" value="ECO:0007669"/>
    <property type="project" value="UniProtKB-UniRule"/>
</dbReference>
<dbReference type="GO" id="GO:0006428">
    <property type="term" value="P:isoleucyl-tRNA aminoacylation"/>
    <property type="evidence" value="ECO:0007669"/>
    <property type="project" value="UniProtKB-UniRule"/>
</dbReference>
<dbReference type="CDD" id="cd07960">
    <property type="entry name" value="Anticodon_Ia_Ile_BEm"/>
    <property type="match status" value="1"/>
</dbReference>
<dbReference type="CDD" id="cd00818">
    <property type="entry name" value="IleRS_core"/>
    <property type="match status" value="1"/>
</dbReference>
<dbReference type="FunFam" id="1.10.730.20:FF:000001">
    <property type="entry name" value="Isoleucine--tRNA ligase"/>
    <property type="match status" value="1"/>
</dbReference>
<dbReference type="FunFam" id="3.40.50.620:FF:000152">
    <property type="entry name" value="Isoleucine--tRNA ligase"/>
    <property type="match status" value="1"/>
</dbReference>
<dbReference type="FunFam" id="3.90.740.10:FF:000013">
    <property type="entry name" value="Isoleucine--tRNA ligase, chloroplastic/mitochondrial"/>
    <property type="match status" value="1"/>
</dbReference>
<dbReference type="FunFam" id="3.40.50.620:FF:000128">
    <property type="entry name" value="Isoleucyl-tRNA synthetase 2, mitochondrial"/>
    <property type="match status" value="1"/>
</dbReference>
<dbReference type="Gene3D" id="1.10.730.20">
    <property type="match status" value="1"/>
</dbReference>
<dbReference type="Gene3D" id="3.40.50.620">
    <property type="entry name" value="HUPs"/>
    <property type="match status" value="2"/>
</dbReference>
<dbReference type="Gene3D" id="1.10.10.830">
    <property type="entry name" value="Ile-tRNA synthetase CP2 domain-like"/>
    <property type="match status" value="1"/>
</dbReference>
<dbReference type="Gene3D" id="3.90.740.10">
    <property type="entry name" value="Valyl/Leucyl/Isoleucyl-tRNA synthetase, editing domain"/>
    <property type="match status" value="1"/>
</dbReference>
<dbReference type="HAMAP" id="MF_02002">
    <property type="entry name" value="Ile_tRNA_synth_type1"/>
    <property type="match status" value="1"/>
</dbReference>
<dbReference type="InterPro" id="IPR001412">
    <property type="entry name" value="aa-tRNA-synth_I_CS"/>
</dbReference>
<dbReference type="InterPro" id="IPR002300">
    <property type="entry name" value="aa-tRNA-synth_Ia"/>
</dbReference>
<dbReference type="InterPro" id="IPR033708">
    <property type="entry name" value="Anticodon_Ile_BEm"/>
</dbReference>
<dbReference type="InterPro" id="IPR002301">
    <property type="entry name" value="Ile-tRNA-ligase"/>
</dbReference>
<dbReference type="InterPro" id="IPR023585">
    <property type="entry name" value="Ile-tRNA-ligase_type1"/>
</dbReference>
<dbReference type="InterPro" id="IPR050081">
    <property type="entry name" value="Ile-tRNA_ligase"/>
</dbReference>
<dbReference type="InterPro" id="IPR013155">
    <property type="entry name" value="M/V/L/I-tRNA-synth_anticd-bd"/>
</dbReference>
<dbReference type="InterPro" id="IPR014729">
    <property type="entry name" value="Rossmann-like_a/b/a_fold"/>
</dbReference>
<dbReference type="InterPro" id="IPR009080">
    <property type="entry name" value="tRNAsynth_Ia_anticodon-bd"/>
</dbReference>
<dbReference type="InterPro" id="IPR009008">
    <property type="entry name" value="Val/Leu/Ile-tRNA-synth_edit"/>
</dbReference>
<dbReference type="InterPro" id="IPR010663">
    <property type="entry name" value="Znf_FPG/IleRS"/>
</dbReference>
<dbReference type="NCBIfam" id="TIGR00392">
    <property type="entry name" value="ileS"/>
    <property type="match status" value="1"/>
</dbReference>
<dbReference type="PANTHER" id="PTHR42765:SF1">
    <property type="entry name" value="ISOLEUCINE--TRNA LIGASE, MITOCHONDRIAL"/>
    <property type="match status" value="1"/>
</dbReference>
<dbReference type="PANTHER" id="PTHR42765">
    <property type="entry name" value="SOLEUCYL-TRNA SYNTHETASE"/>
    <property type="match status" value="1"/>
</dbReference>
<dbReference type="Pfam" id="PF08264">
    <property type="entry name" value="Anticodon_1"/>
    <property type="match status" value="1"/>
</dbReference>
<dbReference type="Pfam" id="PF00133">
    <property type="entry name" value="tRNA-synt_1"/>
    <property type="match status" value="1"/>
</dbReference>
<dbReference type="Pfam" id="PF06827">
    <property type="entry name" value="zf-FPG_IleRS"/>
    <property type="match status" value="1"/>
</dbReference>
<dbReference type="PRINTS" id="PR00984">
    <property type="entry name" value="TRNASYNTHILE"/>
</dbReference>
<dbReference type="SUPFAM" id="SSF47323">
    <property type="entry name" value="Anticodon-binding domain of a subclass of class I aminoacyl-tRNA synthetases"/>
    <property type="match status" value="1"/>
</dbReference>
<dbReference type="SUPFAM" id="SSF52374">
    <property type="entry name" value="Nucleotidylyl transferase"/>
    <property type="match status" value="1"/>
</dbReference>
<dbReference type="SUPFAM" id="SSF50677">
    <property type="entry name" value="ValRS/IleRS/LeuRS editing domain"/>
    <property type="match status" value="1"/>
</dbReference>
<dbReference type="PROSITE" id="PS00178">
    <property type="entry name" value="AA_TRNA_LIGASE_I"/>
    <property type="match status" value="1"/>
</dbReference>